<gene>
    <name evidence="1" type="primary">thrS</name>
    <name type="ordered locus">P9515_06621</name>
</gene>
<organism>
    <name type="scientific">Prochlorococcus marinus (strain MIT 9515)</name>
    <dbReference type="NCBI Taxonomy" id="167542"/>
    <lineage>
        <taxon>Bacteria</taxon>
        <taxon>Bacillati</taxon>
        <taxon>Cyanobacteriota</taxon>
        <taxon>Cyanophyceae</taxon>
        <taxon>Synechococcales</taxon>
        <taxon>Prochlorococcaceae</taxon>
        <taxon>Prochlorococcus</taxon>
    </lineage>
</organism>
<dbReference type="EC" id="6.1.1.3" evidence="1"/>
<dbReference type="EMBL" id="CP000552">
    <property type="protein sequence ID" value="ABM71871.1"/>
    <property type="molecule type" value="Genomic_DNA"/>
</dbReference>
<dbReference type="RefSeq" id="WP_011819976.1">
    <property type="nucleotide sequence ID" value="NC_008817.1"/>
</dbReference>
<dbReference type="SMR" id="A2BVR0"/>
<dbReference type="STRING" id="167542.P9515_06621"/>
<dbReference type="GeneID" id="60201442"/>
<dbReference type="KEGG" id="pmc:P9515_06621"/>
<dbReference type="eggNOG" id="COG0441">
    <property type="taxonomic scope" value="Bacteria"/>
</dbReference>
<dbReference type="HOGENOM" id="CLU_008554_0_1_3"/>
<dbReference type="OrthoDB" id="9802304at2"/>
<dbReference type="Proteomes" id="UP000001589">
    <property type="component" value="Chromosome"/>
</dbReference>
<dbReference type="GO" id="GO:0005829">
    <property type="term" value="C:cytosol"/>
    <property type="evidence" value="ECO:0007669"/>
    <property type="project" value="TreeGrafter"/>
</dbReference>
<dbReference type="GO" id="GO:0005524">
    <property type="term" value="F:ATP binding"/>
    <property type="evidence" value="ECO:0007669"/>
    <property type="project" value="UniProtKB-UniRule"/>
</dbReference>
<dbReference type="GO" id="GO:0046872">
    <property type="term" value="F:metal ion binding"/>
    <property type="evidence" value="ECO:0007669"/>
    <property type="project" value="UniProtKB-KW"/>
</dbReference>
<dbReference type="GO" id="GO:0004829">
    <property type="term" value="F:threonine-tRNA ligase activity"/>
    <property type="evidence" value="ECO:0007669"/>
    <property type="project" value="UniProtKB-UniRule"/>
</dbReference>
<dbReference type="GO" id="GO:0000049">
    <property type="term" value="F:tRNA binding"/>
    <property type="evidence" value="ECO:0007669"/>
    <property type="project" value="UniProtKB-KW"/>
</dbReference>
<dbReference type="GO" id="GO:0006435">
    <property type="term" value="P:threonyl-tRNA aminoacylation"/>
    <property type="evidence" value="ECO:0007669"/>
    <property type="project" value="UniProtKB-UniRule"/>
</dbReference>
<dbReference type="CDD" id="cd01667">
    <property type="entry name" value="TGS_ThrRS"/>
    <property type="match status" value="1"/>
</dbReference>
<dbReference type="CDD" id="cd00771">
    <property type="entry name" value="ThrRS_core"/>
    <property type="match status" value="1"/>
</dbReference>
<dbReference type="FunFam" id="3.10.20.30:FF:000005">
    <property type="entry name" value="Threonine--tRNA ligase"/>
    <property type="match status" value="1"/>
</dbReference>
<dbReference type="FunFam" id="3.30.54.20:FF:000002">
    <property type="entry name" value="Threonine--tRNA ligase"/>
    <property type="match status" value="1"/>
</dbReference>
<dbReference type="FunFam" id="3.30.930.10:FF:000002">
    <property type="entry name" value="Threonine--tRNA ligase"/>
    <property type="match status" value="1"/>
</dbReference>
<dbReference type="FunFam" id="3.30.980.10:FF:000005">
    <property type="entry name" value="Threonyl-tRNA synthetase, mitochondrial"/>
    <property type="match status" value="1"/>
</dbReference>
<dbReference type="Gene3D" id="3.10.20.30">
    <property type="match status" value="1"/>
</dbReference>
<dbReference type="Gene3D" id="3.30.54.20">
    <property type="match status" value="1"/>
</dbReference>
<dbReference type="Gene3D" id="3.40.50.800">
    <property type="entry name" value="Anticodon-binding domain"/>
    <property type="match status" value="1"/>
</dbReference>
<dbReference type="Gene3D" id="3.30.930.10">
    <property type="entry name" value="Bira Bifunctional Protein, Domain 2"/>
    <property type="match status" value="1"/>
</dbReference>
<dbReference type="Gene3D" id="3.30.980.10">
    <property type="entry name" value="Threonyl-trna Synthetase, Chain A, domain 2"/>
    <property type="match status" value="1"/>
</dbReference>
<dbReference type="HAMAP" id="MF_00184">
    <property type="entry name" value="Thr_tRNA_synth"/>
    <property type="match status" value="1"/>
</dbReference>
<dbReference type="InterPro" id="IPR002314">
    <property type="entry name" value="aa-tRNA-synt_IIb"/>
</dbReference>
<dbReference type="InterPro" id="IPR006195">
    <property type="entry name" value="aa-tRNA-synth_II"/>
</dbReference>
<dbReference type="InterPro" id="IPR045864">
    <property type="entry name" value="aa-tRNA-synth_II/BPL/LPL"/>
</dbReference>
<dbReference type="InterPro" id="IPR004154">
    <property type="entry name" value="Anticodon-bd"/>
</dbReference>
<dbReference type="InterPro" id="IPR036621">
    <property type="entry name" value="Anticodon-bd_dom_sf"/>
</dbReference>
<dbReference type="InterPro" id="IPR012675">
    <property type="entry name" value="Beta-grasp_dom_sf"/>
</dbReference>
<dbReference type="InterPro" id="IPR004095">
    <property type="entry name" value="TGS"/>
</dbReference>
<dbReference type="InterPro" id="IPR012676">
    <property type="entry name" value="TGS-like"/>
</dbReference>
<dbReference type="InterPro" id="IPR002320">
    <property type="entry name" value="Thr-tRNA-ligase_IIa"/>
</dbReference>
<dbReference type="InterPro" id="IPR018163">
    <property type="entry name" value="Thr/Ala-tRNA-synth_IIc_edit"/>
</dbReference>
<dbReference type="InterPro" id="IPR033728">
    <property type="entry name" value="ThrRS_core"/>
</dbReference>
<dbReference type="InterPro" id="IPR012947">
    <property type="entry name" value="tRNA_SAD"/>
</dbReference>
<dbReference type="NCBIfam" id="TIGR00418">
    <property type="entry name" value="thrS"/>
    <property type="match status" value="1"/>
</dbReference>
<dbReference type="PANTHER" id="PTHR11451:SF44">
    <property type="entry name" value="THREONINE--TRNA LIGASE, CHLOROPLASTIC_MITOCHONDRIAL 2"/>
    <property type="match status" value="1"/>
</dbReference>
<dbReference type="PANTHER" id="PTHR11451">
    <property type="entry name" value="THREONINE-TRNA LIGASE"/>
    <property type="match status" value="1"/>
</dbReference>
<dbReference type="Pfam" id="PF03129">
    <property type="entry name" value="HGTP_anticodon"/>
    <property type="match status" value="1"/>
</dbReference>
<dbReference type="Pfam" id="PF02824">
    <property type="entry name" value="TGS"/>
    <property type="match status" value="1"/>
</dbReference>
<dbReference type="Pfam" id="PF00587">
    <property type="entry name" value="tRNA-synt_2b"/>
    <property type="match status" value="1"/>
</dbReference>
<dbReference type="Pfam" id="PF07973">
    <property type="entry name" value="tRNA_SAD"/>
    <property type="match status" value="1"/>
</dbReference>
<dbReference type="PRINTS" id="PR01047">
    <property type="entry name" value="TRNASYNTHTHR"/>
</dbReference>
<dbReference type="SMART" id="SM00863">
    <property type="entry name" value="tRNA_SAD"/>
    <property type="match status" value="1"/>
</dbReference>
<dbReference type="SUPFAM" id="SSF52954">
    <property type="entry name" value="Class II aaRS ABD-related"/>
    <property type="match status" value="1"/>
</dbReference>
<dbReference type="SUPFAM" id="SSF55681">
    <property type="entry name" value="Class II aaRS and biotin synthetases"/>
    <property type="match status" value="1"/>
</dbReference>
<dbReference type="SUPFAM" id="SSF81271">
    <property type="entry name" value="TGS-like"/>
    <property type="match status" value="1"/>
</dbReference>
<dbReference type="SUPFAM" id="SSF55186">
    <property type="entry name" value="ThrRS/AlaRS common domain"/>
    <property type="match status" value="1"/>
</dbReference>
<dbReference type="PROSITE" id="PS50862">
    <property type="entry name" value="AA_TRNA_LIGASE_II"/>
    <property type="match status" value="1"/>
</dbReference>
<dbReference type="PROSITE" id="PS51880">
    <property type="entry name" value="TGS"/>
    <property type="match status" value="1"/>
</dbReference>
<protein>
    <recommendedName>
        <fullName evidence="1">Threonine--tRNA ligase</fullName>
        <ecNumber evidence="1">6.1.1.3</ecNumber>
    </recommendedName>
    <alternativeName>
        <fullName evidence="1">Threonyl-tRNA synthetase</fullName>
        <shortName evidence="1">ThrRS</shortName>
    </alternativeName>
</protein>
<name>SYT_PROM5</name>
<evidence type="ECO:0000255" key="1">
    <source>
        <dbReference type="HAMAP-Rule" id="MF_00184"/>
    </source>
</evidence>
<evidence type="ECO:0000255" key="2">
    <source>
        <dbReference type="PROSITE-ProRule" id="PRU01228"/>
    </source>
</evidence>
<reference key="1">
    <citation type="journal article" date="2007" name="PLoS Genet.">
        <title>Patterns and implications of gene gain and loss in the evolution of Prochlorococcus.</title>
        <authorList>
            <person name="Kettler G.C."/>
            <person name="Martiny A.C."/>
            <person name="Huang K."/>
            <person name="Zucker J."/>
            <person name="Coleman M.L."/>
            <person name="Rodrigue S."/>
            <person name="Chen F."/>
            <person name="Lapidus A."/>
            <person name="Ferriera S."/>
            <person name="Johnson J."/>
            <person name="Steglich C."/>
            <person name="Church G.M."/>
            <person name="Richardson P."/>
            <person name="Chisholm S.W."/>
        </authorList>
    </citation>
    <scope>NUCLEOTIDE SEQUENCE [LARGE SCALE GENOMIC DNA]</scope>
    <source>
        <strain>MIT 9515</strain>
    </source>
</reference>
<feature type="chain" id="PRO_1000020465" description="Threonine--tRNA ligase">
    <location>
        <begin position="1"/>
        <end position="638"/>
    </location>
</feature>
<feature type="domain" description="TGS" evidence="2">
    <location>
        <begin position="1"/>
        <end position="61"/>
    </location>
</feature>
<feature type="region of interest" description="Catalytic" evidence="1">
    <location>
        <begin position="242"/>
        <end position="533"/>
    </location>
</feature>
<feature type="binding site" evidence="1">
    <location>
        <position position="333"/>
    </location>
    <ligand>
        <name>Zn(2+)</name>
        <dbReference type="ChEBI" id="CHEBI:29105"/>
    </ligand>
</feature>
<feature type="binding site" evidence="1">
    <location>
        <position position="384"/>
    </location>
    <ligand>
        <name>Zn(2+)</name>
        <dbReference type="ChEBI" id="CHEBI:29105"/>
    </ligand>
</feature>
<feature type="binding site" evidence="1">
    <location>
        <position position="510"/>
    </location>
    <ligand>
        <name>Zn(2+)</name>
        <dbReference type="ChEBI" id="CHEBI:29105"/>
    </ligand>
</feature>
<keyword id="KW-0030">Aminoacyl-tRNA synthetase</keyword>
<keyword id="KW-0067">ATP-binding</keyword>
<keyword id="KW-0963">Cytoplasm</keyword>
<keyword id="KW-0436">Ligase</keyword>
<keyword id="KW-0479">Metal-binding</keyword>
<keyword id="KW-0547">Nucleotide-binding</keyword>
<keyword id="KW-0648">Protein biosynthesis</keyword>
<keyword id="KW-0694">RNA-binding</keyword>
<keyword id="KW-0820">tRNA-binding</keyword>
<keyword id="KW-0862">Zinc</keyword>
<sequence>MPKITLPDGTKKVFEKAVTTLDIAKSIGAGLAKATIAGKVNNVLFDATLPIKNDSKVVIITSRDKEGIEIIRHSFAHLIGHAVKQIYPNIKMAIGPVIEDGFYYDIFSEYRFTPEDLIKIEERINQLIRKDYDVEVLQVSKQEAIKTFKERDEIFKLRIIEEIDEKDSINLYKHEEYIDMCRGPHVPNTRHLRHFKLLKLSGSYWRGDSKNESLQRIYGTAWSKEKDLTNYLKRIEEAEKRDHRKLGKKHSLFHIQEESPGMIFWHPNGWIIYQILEKYIREILRKNEYLEIKTPQAVDKSLWEKSGHWEKFRDDMFTTASENRTYAIKPMNCPCHIQVFNQGLKSYKDLPLRLAEFGSCHRNEPSGALHGLMRVRNFTQDDAHIFCTEEQIQEEVSTFIDLVFEVYNTFGFDEIIIKLSTRPEKRVGSEDIWDKSEEALTEALNNKNLKWELQPGEGAFYGPKIEFSLKDCLNRIWQCGTIQVDFSMPVRLDATFVDINNEKKSPVMLHRAILGSFERFIGILIEQYEAKFPIWLAPTQIILLSITERNIKKCIEFNNLLNTKGYRSKIDIRNEKIGYKIRESTLARIPLIGIVGDKEQELNSVTLRALDGSNLGIYELDNLFKLMNTLIEKKGRVD</sequence>
<proteinExistence type="inferred from homology"/>
<comment type="function">
    <text evidence="1">Catalyzes the attachment of threonine to tRNA(Thr) in a two-step reaction: L-threonine is first activated by ATP to form Thr-AMP and then transferred to the acceptor end of tRNA(Thr). Also edits incorrectly charged L-seryl-tRNA(Thr).</text>
</comment>
<comment type="catalytic activity">
    <reaction evidence="1">
        <text>tRNA(Thr) + L-threonine + ATP = L-threonyl-tRNA(Thr) + AMP + diphosphate + H(+)</text>
        <dbReference type="Rhea" id="RHEA:24624"/>
        <dbReference type="Rhea" id="RHEA-COMP:9670"/>
        <dbReference type="Rhea" id="RHEA-COMP:9704"/>
        <dbReference type="ChEBI" id="CHEBI:15378"/>
        <dbReference type="ChEBI" id="CHEBI:30616"/>
        <dbReference type="ChEBI" id="CHEBI:33019"/>
        <dbReference type="ChEBI" id="CHEBI:57926"/>
        <dbReference type="ChEBI" id="CHEBI:78442"/>
        <dbReference type="ChEBI" id="CHEBI:78534"/>
        <dbReference type="ChEBI" id="CHEBI:456215"/>
        <dbReference type="EC" id="6.1.1.3"/>
    </reaction>
</comment>
<comment type="cofactor">
    <cofactor evidence="1">
        <name>Zn(2+)</name>
        <dbReference type="ChEBI" id="CHEBI:29105"/>
    </cofactor>
    <text evidence="1">Binds 1 zinc ion per subunit.</text>
</comment>
<comment type="subunit">
    <text evidence="1">Homodimer.</text>
</comment>
<comment type="subcellular location">
    <subcellularLocation>
        <location evidence="1">Cytoplasm</location>
    </subcellularLocation>
</comment>
<comment type="similarity">
    <text evidence="1">Belongs to the class-II aminoacyl-tRNA synthetase family.</text>
</comment>
<accession>A2BVR0</accession>